<comment type="function">
    <text evidence="1 7 9 15 17 19 20 24">Calcium-dependent cell adhesion protein; preferentially mediates homotypic cell-cell adhesion by dimerization with a CDH2 chain from another cell (PubMed:11433297, PubMed:17988630, PubMed:25253890, PubMed:2762814, PubMed:9655503). Cadherins may thus contribute to the sorting of heterogeneous cell types. Acts as a regulator of neural stem cells quiescence by mediating anchorage of neural stem cells to ependymocytes in the adult subependymal zone: upon cleavage by MMP24, CDH2-mediated anchorage is affected, leading to modulate neural stem cell quiescence (PubMed:24952463). Plays a role in cell-to-cell junction formation between pancreatic beta cells and neural crest stem (NCS) cells, promoting the formation of processes by NCS cells (PubMed:26750727). Required for proper neurite branching. Required for pre- and postsynaptic organization (By similarity). CDH2 may be involved in neuronal recognition mechanism. In hippocampal neurons, may regulate dendritic spine density.</text>
</comment>
<comment type="subunit">
    <text evidence="2 3 7 11 14 17">Homodimer (via extracellular region) (PubMed:21300292, PubMed:25253890). Can also form heterodimers with other cadherins (via extracellular region) (PubMed:25253890). Dimerization occurs in trans, i.e. with a cadherin chain from another cell (PubMed:21300292, PubMed:25253890). Interacts with CDCP1 (By similarity). Interacts with PCDH8; this complex may also include TAOK2 (By similarity). The interaction with PCDH8 may lead to internalization through TAOK2/p38 MAPK pathway (By similarity). Identified in a complex containing FGFR4, NCAM1, CDH2, PLCG1, FRS2, SRC, SHC1, GAP43 and CTTN (PubMed:11433297). May interact with OBSCN (via protein kinase domain 2) (PubMed:23392350). Interacts with FBXO45 (By similarity).</text>
</comment>
<comment type="interaction">
    <interactant intactId="EBI-397974">
        <id>P15116</id>
    </interactant>
    <interactant intactId="EBI-397974">
        <id>P15116</id>
        <label>Cdh2</label>
    </interactant>
    <organismsDiffer>false</organismsDiffer>
    <experiments>4</experiments>
</comment>
<comment type="interaction">
    <interactant intactId="EBI-397974">
        <id>P15116</id>
    </interactant>
    <interactant intactId="EBI-968788">
        <id>P18031</id>
        <label>PTPN1</label>
    </interactant>
    <organismsDiffer>true</organismsDiffer>
    <experiments>3</experiments>
</comment>
<comment type="subcellular location">
    <subcellularLocation>
        <location evidence="9 18 24">Cell membrane</location>
        <topology evidence="4">Single-pass type I membrane protein</topology>
    </subcellularLocation>
    <subcellularLocation>
        <location evidence="14">Cell membrane</location>
        <location evidence="14">Sarcolemma</location>
    </subcellularLocation>
    <subcellularLocation>
        <location evidence="19">Cell junction</location>
    </subcellularLocation>
    <subcellularLocation>
        <location evidence="8">Cell junction</location>
        <location evidence="8">Adherens junction</location>
    </subcellularLocation>
    <subcellularLocation>
        <location evidence="8">Cell junction</location>
        <location evidence="8">Desmosome</location>
    </subcellularLocation>
    <subcellularLocation>
        <location evidence="16 24">Cell surface</location>
    </subcellularLocation>
    <text evidence="14 18">Colocalizes with TMEM65 at the intercalated disk in cardiomyocytes (PubMed:26403541). Colocalizes with OBSCN at the intercalated disk and sarcolemma in cardiomyocytes (PubMed:23392350).</text>
</comment>
<comment type="tissue specificity">
    <text evidence="14">Expressed in cardiac muscle (at protein level).</text>
</comment>
<comment type="developmental stage">
    <text evidence="13 21 23">Expressed at all stages of testicular development with the highest expression levels found in testes of 21-day-old mice (PubMed:8879495). Expressed at the outer limiting membrane of the retina at 3 months of age (PubMed:23001562). Expression is restricted to the lens stalk region between 10 and 11 dpc. At later stages (17.5 dpc), it is expressed in the developing lens and corneal endothelium (PubMed:31650526).</text>
</comment>
<comment type="domain">
    <text evidence="11 12">Three calcium ions are usually bound at the interface of each cadherin domain and rigidify the connections, imparting a strong curvature to the full-length ectodomain. Calcium-binding sites are occupied sequentially in the order of site 3, then site 2 and site 1.</text>
</comment>
<comment type="PTM">
    <text evidence="10 15">Cleaved by MMP24 (PubMed:19805319, PubMed:24952463). Ectodomain cleavage leads to the generation of a soluble 90 kDa N-terminal soluble fragment and a 45 kDa membrane-bound C-terminal fragment 1 (CTF1), which is further cleaved by gamma-secretase into a 35 kDa (PubMed:24952463). Cleavage in neural stem cells by MMP24 affects CDH2-mediated anchorage of neural stem cells to ependymocytes in the adult subependymal zone, leading to modulate neural stem cell quiescence (PubMed:24952463).</text>
</comment>
<comment type="PTM">
    <text evidence="14">May be phosphorylated by OBSCN.</text>
</comment>
<comment type="PTM">
    <text evidence="11">O-glycosylated on Ser and Thr residues.</text>
</comment>
<comment type="disruption phenotype">
    <text evidence="15">Embryonic lethality.</text>
</comment>
<accession>P15116</accession>
<accession>Q64260</accession>
<accession>Q6GU11</accession>
<sequence length="906" mass="99796">MCRIAGAPRTLLPLLAALLQASVEASGEIALCKTGFPEDVYSAVLPKDVHEGQPLLNVKFSNCNRKRKVQYESSEPADFKVDEDGTVYAVRSFPLTAEQAKFLIYAQDKETQEKWQVAVNLSREPTLTEEPMKEPHEIEEIVFPRQLAKHSGALQRQKRDWVIPPINLPENSRGPFPQELVRIRSDRDKNLSLRYSVTGPGADQPPTGIFIINPISGQLSVTKPLDRELIARFHLRAHAVDINGNQVENPIDIVINVIDMNDNRPEFLHQVWNGSVPEGSKPGTYVMTVTAIDADDPNALNGMLRYRILSQAPSTPSPNMFTINNETGDIITVAAGLDREKVQQYTLIIQATDMEGNPTYGLSNTATAVITVTDVNDNPPEFTAMTFYGEVPENRVDVIVANLTVTDKDQPHTPAWNAAYRISGGDPTGRFAILTDPNSNDGLVTVVKPIDFETNRMFVLTVAAENQVPLAKGIQHPPQSTATVSVTVIDVNENPYFAPNPKIIRQEEGLHAGTMLTTLTAQDPDRYMQQNIRYTKLSDPANWLKIDPVNGQITTIAVLDRESPNVKNNIYNATFLASDNGIPPMSGTGTLQIYLLDINDNAPQVLPQEAETCETPEPNSINITALDYDIDPNAGPFAFDLPLSPVTIKRNWTINRLNGDFAQLNLKIKFLEAGIYEVPIIITDSGNPPKSNISILRVKVCQCDSNGDCTDVDRIVGAGLGTGAIIAILLCIIILLILVLMFVVWMKRRDKERQAKQLLIDPEDDVRDNILKYDEEGGGEEDQDYDLSQLQQPDTVEPDAIKPVGIRRLDERPIHAEPQYPVRSAAPHPGDIGDFINEGLKAADNDPTAPPYDSLLVFDYEGSGSTAGSLSSLNSSSSGGDQDYDYLNDWGPRFKKLADMYGGGDD</sequence>
<organism>
    <name type="scientific">Mus musculus</name>
    <name type="common">Mouse</name>
    <dbReference type="NCBI Taxonomy" id="10090"/>
    <lineage>
        <taxon>Eukaryota</taxon>
        <taxon>Metazoa</taxon>
        <taxon>Chordata</taxon>
        <taxon>Craniata</taxon>
        <taxon>Vertebrata</taxon>
        <taxon>Euteleostomi</taxon>
        <taxon>Mammalia</taxon>
        <taxon>Eutheria</taxon>
        <taxon>Euarchontoglires</taxon>
        <taxon>Glires</taxon>
        <taxon>Rodentia</taxon>
        <taxon>Myomorpha</taxon>
        <taxon>Muroidea</taxon>
        <taxon>Muridae</taxon>
        <taxon>Murinae</taxon>
        <taxon>Mus</taxon>
        <taxon>Mus</taxon>
    </lineage>
</organism>
<feature type="signal peptide" evidence="4">
    <location>
        <begin position="1"/>
        <end position="25"/>
    </location>
</feature>
<feature type="propeptide" id="PRO_0000003733" evidence="4">
    <location>
        <begin position="26"/>
        <end position="159"/>
    </location>
</feature>
<feature type="chain" id="PRO_0000003734" description="Cadherin-2">
    <location>
        <begin position="160"/>
        <end position="906"/>
    </location>
</feature>
<feature type="topological domain" description="Extracellular" evidence="4">
    <location>
        <begin position="160"/>
        <end position="724"/>
    </location>
</feature>
<feature type="transmembrane region" description="Helical" evidence="4">
    <location>
        <begin position="725"/>
        <end position="745"/>
    </location>
</feature>
<feature type="topological domain" description="Cytoplasmic" evidence="4">
    <location>
        <begin position="746"/>
        <end position="906"/>
    </location>
</feature>
<feature type="domain" description="Cadherin 1" evidence="5">
    <location>
        <begin position="160"/>
        <end position="267"/>
    </location>
</feature>
<feature type="domain" description="Cadherin 2" evidence="5">
    <location>
        <begin position="268"/>
        <end position="382"/>
    </location>
</feature>
<feature type="domain" description="Cadherin 3" evidence="5">
    <location>
        <begin position="383"/>
        <end position="497"/>
    </location>
</feature>
<feature type="domain" description="Cadherin 4" evidence="5">
    <location>
        <begin position="498"/>
        <end position="603"/>
    </location>
</feature>
<feature type="domain" description="Cadherin 5" evidence="5">
    <location>
        <begin position="604"/>
        <end position="717"/>
    </location>
</feature>
<feature type="region of interest" description="Disordered" evidence="6">
    <location>
        <begin position="863"/>
        <end position="883"/>
    </location>
</feature>
<feature type="compositionally biased region" description="Low complexity" evidence="6">
    <location>
        <begin position="863"/>
        <end position="880"/>
    </location>
</feature>
<feature type="binding site" evidence="17 33">
    <location>
        <position position="170"/>
    </location>
    <ligand>
        <name>Ca(2+)</name>
        <dbReference type="ChEBI" id="CHEBI:29108"/>
        <label>1</label>
    </ligand>
</feature>
<feature type="binding site" evidence="17 33">
    <location>
        <position position="170"/>
    </location>
    <ligand>
        <name>Ca(2+)</name>
        <dbReference type="ChEBI" id="CHEBI:29108"/>
        <label>2</label>
    </ligand>
</feature>
<feature type="binding site" evidence="17 33">
    <location>
        <position position="226"/>
    </location>
    <ligand>
        <name>Ca(2+)</name>
        <dbReference type="ChEBI" id="CHEBI:29108"/>
        <label>1</label>
    </ligand>
</feature>
<feature type="binding site" evidence="17 33">
    <location>
        <position position="228"/>
    </location>
    <ligand>
        <name>Ca(2+)</name>
        <dbReference type="ChEBI" id="CHEBI:29108"/>
        <label>1</label>
    </ligand>
</feature>
<feature type="binding site" evidence="17 33">
    <location>
        <position position="228"/>
    </location>
    <ligand>
        <name>Ca(2+)</name>
        <dbReference type="ChEBI" id="CHEBI:29108"/>
        <label>2</label>
    </ligand>
</feature>
<feature type="binding site" evidence="17 33">
    <location>
        <position position="259"/>
    </location>
    <ligand>
        <name>Ca(2+)</name>
        <dbReference type="ChEBI" id="CHEBI:29108"/>
        <label>2</label>
    </ligand>
</feature>
<feature type="binding site" evidence="17 33">
    <location>
        <position position="260"/>
    </location>
    <ligand>
        <name>Ca(2+)</name>
        <dbReference type="ChEBI" id="CHEBI:29108"/>
        <label>2</label>
    </ligand>
</feature>
<feature type="binding site" evidence="17 33">
    <location>
        <position position="261"/>
    </location>
    <ligand>
        <name>Ca(2+)</name>
        <dbReference type="ChEBI" id="CHEBI:29108"/>
        <label>3</label>
    </ligand>
</feature>
<feature type="binding site" evidence="12 17 33">
    <location>
        <position position="262"/>
    </location>
    <ligand>
        <name>Ca(2+)</name>
        <dbReference type="ChEBI" id="CHEBI:29108"/>
        <label>1</label>
    </ligand>
</feature>
<feature type="binding site" evidence="12 17 33">
    <location>
        <position position="262"/>
    </location>
    <ligand>
        <name>Ca(2+)</name>
        <dbReference type="ChEBI" id="CHEBI:29108"/>
        <label>2</label>
    </ligand>
</feature>
<feature type="binding site" evidence="17 33">
    <location>
        <position position="263"/>
    </location>
    <ligand>
        <name>Ca(2+)</name>
        <dbReference type="ChEBI" id="CHEBI:29108"/>
        <label>3</label>
    </ligand>
</feature>
<feature type="binding site" evidence="12 17 33">
    <location>
        <position position="293"/>
    </location>
    <ligand>
        <name>Ca(2+)</name>
        <dbReference type="ChEBI" id="CHEBI:29108"/>
        <label>3</label>
    </ligand>
</feature>
<feature type="binding site" evidence="17 33">
    <location>
        <position position="295"/>
    </location>
    <ligand>
        <name>Ca(2+)</name>
        <dbReference type="ChEBI" id="CHEBI:29108"/>
        <label>2</label>
    </ligand>
</feature>
<feature type="binding site" evidence="17 33">
    <location>
        <position position="301"/>
    </location>
    <ligand>
        <name>Ca(2+)</name>
        <dbReference type="ChEBI" id="CHEBI:29108"/>
        <label>3</label>
    </ligand>
</feature>
<feature type="binding site" evidence="17 33">
    <location>
        <position position="353"/>
    </location>
    <ligand>
        <name>Ca(2+)</name>
        <dbReference type="ChEBI" id="CHEBI:29108"/>
        <label>3</label>
    </ligand>
</feature>
<feature type="glycosylation site" description="N-linked (GlcNAc...) asparagine" evidence="4">
    <location>
        <position position="190"/>
    </location>
</feature>
<feature type="glycosylation site" description="N-linked (GlcNAc...) asparagine" evidence="11 30">
    <location>
        <position position="273"/>
    </location>
</feature>
<feature type="glycosylation site" description="N-linked (GlcNAc...) asparagine" evidence="11 30">
    <location>
        <position position="325"/>
    </location>
</feature>
<feature type="glycosylation site" description="N-linked (GlcNAc...) asparagine" evidence="11 30">
    <location>
        <position position="402"/>
    </location>
</feature>
<feature type="glycosylation site" description="N-linked (GlcNAc...) asparagine" evidence="11 30">
    <location>
        <position position="572"/>
    </location>
</feature>
<feature type="glycosylation site" description="N-linked (GlcNAc...) asparagine" evidence="11 30">
    <location>
        <position position="651"/>
    </location>
</feature>
<feature type="glycosylation site" description="N-linked (GlcNAc...) asparagine" evidence="4">
    <location>
        <position position="692"/>
    </location>
</feature>
<feature type="mutagenesis site" description="CRISPR/Cas9-mutated knockin mice manifest motor-associated features of hyperactivity such as greater traveling distance, increased velocity and prolonged mobility time compared with control mice. Synaptic release is attenuated in neuron from mutant mice and synaptic vesicle clusters size is reduced in presynaptic terminals." evidence="22">
    <original>H</original>
    <variation>Y</variation>
    <location>
        <position position="150"/>
    </location>
</feature>
<feature type="mutagenesis site" description="Loss of calcium-dependent cell-cell adhesion." evidence="24">
    <original>W</original>
    <variation>A</variation>
    <variation>Y</variation>
    <location>
        <position position="161"/>
    </location>
</feature>
<feature type="mutagenesis site" description="Loss of dimerization; when associated with E-173." evidence="17">
    <original>W</original>
    <variation>A</variation>
    <location>
        <position position="161"/>
    </location>
</feature>
<feature type="mutagenesis site" description="Decreased calcium-dependent cell-cell adhesion." evidence="24">
    <original>V</original>
    <variation>A</variation>
    <location>
        <position position="162"/>
    </location>
</feature>
<feature type="mutagenesis site" description="Loss of dimerization; when associated with A-161." evidence="17">
    <original>R</original>
    <variation>E</variation>
    <location>
        <position position="173"/>
    </location>
</feature>
<feature type="mutagenesis site" description="Loss of calcium-dependent cell-cell adhesion." evidence="24">
    <original>A</original>
    <variation>M</variation>
    <location>
        <position position="237"/>
    </location>
</feature>
<feature type="mutagenesis site" description="Loss of calcium-dependent cell-cell adhesion." evidence="24">
    <original>A</original>
    <variation>M</variation>
    <location>
        <position position="239"/>
    </location>
</feature>
<feature type="mutagenesis site" description="Abolishes dimerization." evidence="12">
    <original>D</original>
    <variation>A</variation>
    <location>
        <position position="262"/>
    </location>
</feature>
<feature type="mutagenesis site" description="Severely impaired the binding of calcium to all three sites." evidence="12">
    <original>D</original>
    <variation>A</variation>
    <location>
        <position position="293"/>
    </location>
</feature>
<feature type="sequence conflict" description="In Ref. 1; AAA37353." evidence="25" ref="1">
    <original>APR</original>
    <variation>GRG</variation>
    <location>
        <begin position="7"/>
        <end position="9"/>
    </location>
</feature>
<feature type="sequence conflict" description="In Ref. 1; AAA37353." evidence="25" ref="1">
    <original>NVK</original>
    <variation>YVQ</variation>
    <location>
        <begin position="565"/>
        <end position="567"/>
    </location>
</feature>
<feature type="sequence conflict" description="In Ref. 1; AAA37353." evidence="25" ref="1">
    <original>T</original>
    <variation>A</variation>
    <location>
        <position position="624"/>
    </location>
</feature>
<feature type="strand" evidence="36">
    <location>
        <begin position="40"/>
        <end position="43"/>
    </location>
</feature>
<feature type="strand" evidence="36">
    <location>
        <begin position="55"/>
        <end position="57"/>
    </location>
</feature>
<feature type="strand" evidence="36">
    <location>
        <begin position="69"/>
        <end position="72"/>
    </location>
</feature>
<feature type="strand" evidence="36">
    <location>
        <begin position="76"/>
        <end position="82"/>
    </location>
</feature>
<feature type="turn" evidence="36">
    <location>
        <begin position="83"/>
        <end position="85"/>
    </location>
</feature>
<feature type="strand" evidence="36">
    <location>
        <begin position="86"/>
        <end position="91"/>
    </location>
</feature>
<feature type="strand" evidence="36">
    <location>
        <begin position="96"/>
        <end position="98"/>
    </location>
</feature>
<feature type="strand" evidence="36">
    <location>
        <begin position="100"/>
        <end position="108"/>
    </location>
</feature>
<feature type="turn" evidence="36">
    <location>
        <begin position="109"/>
        <end position="112"/>
    </location>
</feature>
<feature type="strand" evidence="36">
    <location>
        <begin position="113"/>
        <end position="121"/>
    </location>
</feature>
<feature type="strand" evidence="34">
    <location>
        <begin position="166"/>
        <end position="171"/>
    </location>
</feature>
<feature type="strand" evidence="34">
    <location>
        <begin position="176"/>
        <end position="182"/>
    </location>
</feature>
<feature type="helix" evidence="34">
    <location>
        <begin position="186"/>
        <end position="190"/>
    </location>
</feature>
<feature type="strand" evidence="34">
    <location>
        <begin position="194"/>
        <end position="199"/>
    </location>
</feature>
<feature type="turn" evidence="34">
    <location>
        <begin position="200"/>
        <end position="202"/>
    </location>
</feature>
<feature type="strand" evidence="34">
    <location>
        <begin position="203"/>
        <end position="206"/>
    </location>
</feature>
<feature type="strand" evidence="34">
    <location>
        <begin position="209"/>
        <end position="212"/>
    </location>
</feature>
<feature type="turn" evidence="34">
    <location>
        <begin position="214"/>
        <end position="216"/>
    </location>
</feature>
<feature type="strand" evidence="34">
    <location>
        <begin position="218"/>
        <end position="221"/>
    </location>
</feature>
<feature type="turn" evidence="34">
    <location>
        <begin position="227"/>
        <end position="229"/>
    </location>
</feature>
<feature type="strand" evidence="34">
    <location>
        <begin position="232"/>
        <end position="240"/>
    </location>
</feature>
<feature type="turn" evidence="37">
    <location>
        <begin position="242"/>
        <end position="244"/>
    </location>
</feature>
<feature type="strand" evidence="35">
    <location>
        <begin position="246"/>
        <end position="248"/>
    </location>
</feature>
<feature type="strand" evidence="34">
    <location>
        <begin position="251"/>
        <end position="258"/>
    </location>
</feature>
<feature type="strand" evidence="39">
    <location>
        <begin position="266"/>
        <end position="268"/>
    </location>
</feature>
<feature type="strand" evidence="39">
    <location>
        <begin position="270"/>
        <end position="277"/>
    </location>
</feature>
<feature type="strand" evidence="39">
    <location>
        <begin position="285"/>
        <end position="288"/>
    </location>
</feature>
<feature type="helix" evidence="39">
    <location>
        <begin position="300"/>
        <end position="302"/>
    </location>
</feature>
<feature type="strand" evidence="39">
    <location>
        <begin position="305"/>
        <end position="313"/>
    </location>
</feature>
<feature type="strand" evidence="39">
    <location>
        <begin position="321"/>
        <end position="323"/>
    </location>
</feature>
<feature type="turn" evidence="39">
    <location>
        <begin position="325"/>
        <end position="327"/>
    </location>
</feature>
<feature type="strand" evidence="39">
    <location>
        <begin position="329"/>
        <end position="332"/>
    </location>
</feature>
<feature type="turn" evidence="39">
    <location>
        <begin position="339"/>
        <end position="341"/>
    </location>
</feature>
<feature type="strand" evidence="39">
    <location>
        <begin position="344"/>
        <end position="353"/>
    </location>
</feature>
<feature type="helix" evidence="39">
    <location>
        <begin position="354"/>
        <end position="356"/>
    </location>
</feature>
<feature type="turn" evidence="39">
    <location>
        <begin position="358"/>
        <end position="360"/>
    </location>
</feature>
<feature type="strand" evidence="39">
    <location>
        <begin position="363"/>
        <end position="373"/>
    </location>
</feature>
<feature type="strand" evidence="38">
    <location>
        <begin position="381"/>
        <end position="394"/>
    </location>
</feature>
<feature type="strand" evidence="38">
    <location>
        <begin position="396"/>
        <end position="406"/>
    </location>
</feature>
<feature type="turn" evidence="38">
    <location>
        <begin position="414"/>
        <end position="416"/>
    </location>
</feature>
<feature type="strand" evidence="38">
    <location>
        <begin position="421"/>
        <end position="425"/>
    </location>
</feature>
<feature type="strand" evidence="38">
    <location>
        <begin position="431"/>
        <end position="435"/>
    </location>
</feature>
<feature type="turn" evidence="38">
    <location>
        <begin position="437"/>
        <end position="439"/>
    </location>
</feature>
<feature type="strand" evidence="38">
    <location>
        <begin position="441"/>
        <end position="446"/>
    </location>
</feature>
<feature type="turn" evidence="38">
    <location>
        <begin position="452"/>
        <end position="454"/>
    </location>
</feature>
<feature type="strand" evidence="38">
    <location>
        <begin position="456"/>
        <end position="463"/>
    </location>
</feature>
<feature type="strand" evidence="38">
    <location>
        <begin position="466"/>
        <end position="468"/>
    </location>
</feature>
<feature type="helix" evidence="38">
    <location>
        <begin position="478"/>
        <end position="480"/>
    </location>
</feature>
<feature type="strand" evidence="38">
    <location>
        <begin position="481"/>
        <end position="489"/>
    </location>
</feature>
<feature type="strand" evidence="38">
    <location>
        <begin position="496"/>
        <end position="508"/>
    </location>
</feature>
<feature type="strand" evidence="38">
    <location>
        <begin position="515"/>
        <end position="518"/>
    </location>
</feature>
<feature type="strand" evidence="38">
    <location>
        <begin position="526"/>
        <end position="528"/>
    </location>
</feature>
<feature type="strand" evidence="38">
    <location>
        <begin position="532"/>
        <end position="538"/>
    </location>
</feature>
<feature type="strand" evidence="38">
    <location>
        <begin position="544"/>
        <end position="546"/>
    </location>
</feature>
<feature type="turn" evidence="38">
    <location>
        <begin position="548"/>
        <end position="550"/>
    </location>
</feature>
<feature type="strand" evidence="38">
    <location>
        <begin position="552"/>
        <end position="557"/>
    </location>
</feature>
<feature type="strand" evidence="38">
    <location>
        <begin position="561"/>
        <end position="563"/>
    </location>
</feature>
<feature type="strand" evidence="38">
    <location>
        <begin position="568"/>
        <end position="579"/>
    </location>
</feature>
<feature type="strand" evidence="38">
    <location>
        <begin position="581"/>
        <end position="583"/>
    </location>
</feature>
<feature type="strand" evidence="38">
    <location>
        <begin position="586"/>
        <end position="596"/>
    </location>
</feature>
<feature type="strand" evidence="38">
    <location>
        <begin position="604"/>
        <end position="606"/>
    </location>
</feature>
<feature type="strand" evidence="38">
    <location>
        <begin position="621"/>
        <end position="623"/>
    </location>
</feature>
<feature type="strand" evidence="38">
    <location>
        <begin position="633"/>
        <end position="636"/>
    </location>
</feature>
<feature type="strand" evidence="38">
    <location>
        <begin position="638"/>
        <end position="640"/>
    </location>
</feature>
<feature type="strand" evidence="38">
    <location>
        <begin position="643"/>
        <end position="645"/>
    </location>
</feature>
<feature type="helix" evidence="38">
    <location>
        <begin position="646"/>
        <end position="651"/>
    </location>
</feature>
<feature type="strand" evidence="38">
    <location>
        <begin position="652"/>
        <end position="656"/>
    </location>
</feature>
<feature type="strand" evidence="38">
    <location>
        <begin position="658"/>
        <end position="660"/>
    </location>
</feature>
<feature type="strand" evidence="38">
    <location>
        <begin position="662"/>
        <end position="666"/>
    </location>
</feature>
<feature type="strand" evidence="38">
    <location>
        <begin position="674"/>
        <end position="683"/>
    </location>
</feature>
<feature type="strand" evidence="38">
    <location>
        <begin position="685"/>
        <end position="688"/>
    </location>
</feature>
<feature type="strand" evidence="38">
    <location>
        <begin position="691"/>
        <end position="700"/>
    </location>
</feature>
<gene>
    <name type="primary">Cdh2</name>
</gene>
<proteinExistence type="evidence at protein level"/>
<reference key="1">
    <citation type="journal article" date="1989" name="Science">
        <title>Neural cadherin: role in selective cell-cell adhesion.</title>
        <authorList>
            <person name="Miyatani S."/>
            <person name="Shimamura K."/>
            <person name="Hatta M."/>
            <person name="Nagafuchi A."/>
            <person name="Nose A."/>
            <person name="Matsunaga M."/>
            <person name="Hatta K."/>
            <person name="Takeichi M."/>
        </authorList>
    </citation>
    <scope>NUCLEOTIDE SEQUENCE [MRNA]</scope>
    <scope>FUNCTION</scope>
</reference>
<reference key="2">
    <citation type="submission" date="1997-11" db="EMBL/GenBank/DDBJ databases">
        <authorList>
            <person name="Tamura K."/>
        </authorList>
    </citation>
    <scope>NUCLEOTIDE SEQUENCE [MRNA]</scope>
</reference>
<reference key="3">
    <citation type="journal article" date="1992" name="Proc. Natl. Acad. Sci. U.S.A.">
        <title>Genomic structure and chromosomal mapping of the mouse N-cadherin gene.</title>
        <authorList>
            <person name="Miyatani S."/>
            <person name="Copeland N.G."/>
            <person name="Gilbert D.J."/>
            <person name="Jenkins N.A."/>
            <person name="Takeichi M."/>
        </authorList>
    </citation>
    <scope>PARTIAL NUCLEOTIDE SEQUENCE [GENOMIC DNA]</scope>
    <source>
        <strain>C57BL/6J</strain>
    </source>
</reference>
<reference key="4">
    <citation type="submission" date="2005-07" db="EMBL/GenBank/DDBJ databases">
        <authorList>
            <person name="Mural R.J."/>
            <person name="Adams M.D."/>
            <person name="Myers E.W."/>
            <person name="Smith H.O."/>
            <person name="Venter J.C."/>
        </authorList>
    </citation>
    <scope>NUCLEOTIDE SEQUENCE [LARGE SCALE GENOMIC DNA]</scope>
</reference>
<reference key="5">
    <citation type="journal article" date="2004" name="Genome Res.">
        <title>The status, quality, and expansion of the NIH full-length cDNA project: the Mammalian Gene Collection (MGC).</title>
        <authorList>
            <consortium name="The MGC Project Team"/>
        </authorList>
    </citation>
    <scope>NUCLEOTIDE SEQUENCE [LARGE SCALE MRNA]</scope>
    <source>
        <strain>FVB/N</strain>
        <tissue>Liver</tissue>
    </source>
</reference>
<reference key="6">
    <citation type="journal article" date="1996" name="Biol. Reprod.">
        <title>A comprehensive survey of the cadherins expressed in the testes of fetal, immature, and adult mice utilizing the polymerase chain reaction.</title>
        <authorList>
            <person name="Munro S.B."/>
            <person name="Blaschuk O.W."/>
        </authorList>
    </citation>
    <scope>DEVELOPMENTAL STAGE</scope>
    <source>
        <strain>C57BL/6J</strain>
        <tissue>Testis</tissue>
    </source>
</reference>
<reference key="7">
    <citation type="journal article" date="2001" name="Nat. Cell Biol.">
        <title>N-CAM modulates tumour-cell adhesion to matrix by inducing FGF-receptor signalling.</title>
        <authorList>
            <person name="Cavallaro U."/>
            <person name="Niedermeyer J."/>
            <person name="Fuxa M."/>
            <person name="Christofori G."/>
        </authorList>
    </citation>
    <scope>FUNCTION</scope>
    <scope>IDENTIFICATION IN A COMPLEX WITH FGFR4; PLCG1; FRS2; SRC; GAP43 AND CTTN</scope>
</reference>
<reference key="8">
    <citation type="journal article" date="2004" name="J. Cell Biol.">
        <title>Requirement of plakophilin 2 for heart morphogenesis and cardiac junction formation.</title>
        <authorList>
            <person name="Grossmann K.S."/>
            <person name="Grund C."/>
            <person name="Huelsken J."/>
            <person name="Behrend M."/>
            <person name="Erdmann B."/>
            <person name="Franke W.W."/>
            <person name="Birchmeier W."/>
        </authorList>
    </citation>
    <scope>SUBCELLULAR LOCATION</scope>
</reference>
<reference key="9">
    <citation type="journal article" date="2007" name="Neuron">
        <title>Activity-induced protocadherin arcadlin regulates dendritic spine number by triggering N-cadherin endocytosis via TAO2beta and p38 MAP kinases.</title>
        <authorList>
            <person name="Yasuda S."/>
            <person name="Tanaka H."/>
            <person name="Sugiura H."/>
            <person name="Okamura K."/>
            <person name="Sakaguchi T."/>
            <person name="Tran U."/>
            <person name="Takemiya T."/>
            <person name="Mizoguchi A."/>
            <person name="Yagita Y."/>
            <person name="Sakurai T."/>
            <person name="De Robertis E.M."/>
            <person name="Yamagata K."/>
        </authorList>
    </citation>
    <scope>FUNCTION</scope>
    <scope>PCDH8-MEDIATED ENDOCYTOSIS</scope>
    <scope>SUBCELLULAR LOCATION</scope>
</reference>
<reference key="10">
    <citation type="journal article" date="2009" name="Proc. Natl. Acad. Sci. U.S.A.">
        <title>Metalloproteinase MT5-MMP is an essential modulator of neuro-immune interactions in thermal pain stimulation.</title>
        <authorList>
            <person name="Folgueras A.R."/>
            <person name="Valdes-Sanchez T."/>
            <person name="Llano E."/>
            <person name="Menendez L."/>
            <person name="Baamonde A."/>
            <person name="Denlinger B.L."/>
            <person name="Belmonte C."/>
            <person name="Juarez L."/>
            <person name="Lastra A."/>
            <person name="Garcia-Suarez O."/>
            <person name="Astudillo A."/>
            <person name="Kirstein M."/>
            <person name="Pendas A.M."/>
            <person name="Farinas I."/>
            <person name="Lopez-Otin C."/>
        </authorList>
    </citation>
    <scope>PROTEOLYTIC PROCESSING</scope>
</reference>
<reference key="11">
    <citation type="journal article" date="2010" name="Cell">
        <title>A tissue-specific atlas of mouse protein phosphorylation and expression.</title>
        <authorList>
            <person name="Huttlin E.L."/>
            <person name="Jedrychowski M.P."/>
            <person name="Elias J.E."/>
            <person name="Goswami T."/>
            <person name="Rad R."/>
            <person name="Beausoleil S.A."/>
            <person name="Villen J."/>
            <person name="Haas W."/>
            <person name="Sowa M.E."/>
            <person name="Gygi S.P."/>
        </authorList>
    </citation>
    <scope>IDENTIFICATION BY MASS SPECTROMETRY [LARGE SCALE ANALYSIS]</scope>
    <source>
        <tissue>Brain</tissue>
        <tissue>Brown adipose tissue</tissue>
        <tissue>Heart</tissue>
        <tissue>Liver</tissue>
        <tissue>Lung</tissue>
        <tissue>Testis</tissue>
    </source>
</reference>
<reference key="12">
    <citation type="journal article" date="2011" name="Biochemistry">
        <title>Sequential binding of calcium leads to dimerization in neural cadherin.</title>
        <authorList>
            <person name="Vunnam N."/>
            <person name="Pedigo S."/>
        </authorList>
    </citation>
    <scope>CALCIUM-BINDING SITES</scope>
    <scope>MUTAGENESIS OF ASP-262 AND ASP-293</scope>
    <scope>DOMAIN</scope>
</reference>
<reference key="13">
    <citation type="journal article" date="2013" name="FASEB J.">
        <title>The kinase domains of obscurin interact with intercellular adhesion proteins.</title>
        <authorList>
            <person name="Hu L.Y."/>
            <person name="Kontrogianni-Konstantopoulos A."/>
        </authorList>
    </citation>
    <scope>INTERACTION WITH OBSCN</scope>
    <scope>SUBCELLULAR LOCATION</scope>
    <scope>TISSUE SPECIFICITY</scope>
    <scope>PHOSPHORYLATION</scope>
</reference>
<reference key="14">
    <citation type="journal article" date="2013" name="Hum. Mol. Genet.">
        <title>Loss of CRB2 in the mouse retina mimics human retinitis pigmentosa due to mutations in the CRB1 gene.</title>
        <authorList>
            <person name="Alves C.H."/>
            <person name="Sanz A.S."/>
            <person name="Park B."/>
            <person name="Pellissier L.P."/>
            <person name="Tanimoto N."/>
            <person name="Beck S.C."/>
            <person name="Huber G."/>
            <person name="Murtaza M."/>
            <person name="Richard F."/>
            <person name="Sridevi Gurubaran I."/>
            <person name="Garcia Garrido M."/>
            <person name="Levelt C.N."/>
            <person name="Rashbass P."/>
            <person name="Le Bivic A."/>
            <person name="Seeliger M.W."/>
            <person name="Wijnholds J."/>
        </authorList>
    </citation>
    <scope>DEVELOPMENTAL STAGE</scope>
</reference>
<reference key="15">
    <citation type="journal article" date="2014" name="J. Neurosci.">
        <title>Dlg5 regulates dendritic spine formation and synaptogenesis by controlling subcellular N-cadherin localization.</title>
        <authorList>
            <person name="Wang S.H."/>
            <person name="Celic I."/>
            <person name="Choi S.Y."/>
            <person name="Riccomagno M."/>
            <person name="Wang Q."/>
            <person name="Sun L.O."/>
            <person name="Mitchell S.P."/>
            <person name="Vasioukhin V."/>
            <person name="Huganir R.L."/>
            <person name="Kolodkin A.L."/>
        </authorList>
    </citation>
    <scope>SUBCELLULAR LOCATION</scope>
</reference>
<reference key="16">
    <citation type="journal article" date="2014" name="Nat. Cell Biol.">
        <title>MT5-MMP regulates adult neural stem cell functional quiescence through the cleavage of N-cadherin.</title>
        <authorList>
            <person name="Porlan E."/>
            <person name="Marti-Prado B."/>
            <person name="Morante-Redolat J.M."/>
            <person name="Consiglio A."/>
            <person name="Delgado A.C."/>
            <person name="Kypta R."/>
            <person name="Lopez-Otin C."/>
            <person name="Kirstein M."/>
            <person name="Farinas I."/>
        </authorList>
    </citation>
    <scope>FUNCTION</scope>
    <scope>DISRUPTION PHENOTYPE</scope>
    <scope>PROTEOLYTIC PROCESSING</scope>
</reference>
<reference key="17">
    <citation type="journal article" date="2015" name="Nat. Commun.">
        <title>Evolutionarily conserved intercalated disc protein Tmem65 regulates cardiac conduction and connexin 43 function.</title>
        <authorList>
            <person name="Sharma P."/>
            <person name="Abbasi C."/>
            <person name="Lazic S."/>
            <person name="Teng A.C."/>
            <person name="Wang D."/>
            <person name="Dubois N."/>
            <person name="Ignatchenko V."/>
            <person name="Wong V."/>
            <person name="Liu J."/>
            <person name="Araki T."/>
            <person name="Tiburcy M."/>
            <person name="Ackerley C."/>
            <person name="Zimmermann W.H."/>
            <person name="Hamilton R."/>
            <person name="Sun Y."/>
            <person name="Liu P.P."/>
            <person name="Keller G."/>
            <person name="Stagljar I."/>
            <person name="Scott I.C."/>
            <person name="Kislinger T."/>
            <person name="Gramolini A.O."/>
        </authorList>
    </citation>
    <scope>SUBCELLULAR LOCATION</scope>
</reference>
<reference key="18">
    <citation type="journal article" date="2016" name="Sci. Rep.">
        <title>Knock-down of ZBED6 in insulin-producing cells promotes N-cadherin junctions between beta-cells and neural crest stem cells in vitro.</title>
        <authorList>
            <person name="Wang X."/>
            <person name="Xie B."/>
            <person name="Qi Y."/>
            <person name="Wallerman O."/>
            <person name="Vasylovska S."/>
            <person name="Andersson L."/>
            <person name="Kozlova E.N."/>
            <person name="Welsh N."/>
        </authorList>
    </citation>
    <scope>FUNCTION</scope>
    <scope>SUBCELLULAR LOCATION</scope>
</reference>
<reference evidence="26 27 28" key="19">
    <citation type="journal article" date="1995" name="Nature">
        <title>Structural basis of cell-cell adhesion by cadherins.</title>
        <authorList>
            <person name="Shapiro L."/>
            <person name="Fannon A.M."/>
            <person name="Kwong P.D."/>
            <person name="Thompson A."/>
            <person name="Lehmann M.S."/>
            <person name="Gruebel G."/>
            <person name="Legrand J.-F."/>
            <person name="Als-Nielsen J."/>
            <person name="Colman D.R."/>
            <person name="Hendrickson W.A."/>
        </authorList>
    </citation>
    <scope>X-RAY CRYSTALLOGRAPHY (2.10 ANGSTROMS) OF 160-267</scope>
</reference>
<reference key="20">
    <citation type="journal article" date="2020" name="Clin. Genet.">
        <title>Novel variants in CDH2 are associated with a new syndrome including Peters anomaly.</title>
        <authorList>
            <person name="Reis L.M."/>
            <person name="Houssin N.S."/>
            <person name="Zamora C."/>
            <person name="Abdul-Rahman O."/>
            <person name="Kalish J.M."/>
            <person name="Zackai E.H."/>
            <person name="Plageman T.F. Jr."/>
            <person name="Semina E.V."/>
        </authorList>
    </citation>
    <scope>DEVELOPMENTAL STAGE</scope>
</reference>
<reference key="21">
    <citation type="journal article" date="2021" name="Nat. Commun.">
        <title>CDH2 mutation affecting N-cadherin function causes attention-deficit hyperactivity disorder in humans and mice.</title>
        <authorList>
            <person name="Halperin D."/>
            <person name="Stavsky A."/>
            <person name="Kadir R."/>
            <person name="Drabkin M."/>
            <person name="Wormser O."/>
            <person name="Yogev Y."/>
            <person name="Dolgin V."/>
            <person name="Proskorovski-Ohayon R."/>
            <person name="Perez Y."/>
            <person name="Nudelman H."/>
            <person name="Stoler O."/>
            <person name="Rotblat B."/>
            <person name="Lifschytz T."/>
            <person name="Lotan A."/>
            <person name="Meiri G."/>
            <person name="Gitler D."/>
            <person name="Birk O.S."/>
        </authorList>
    </citation>
    <scope>MUTAGENESIS OF HIS-150</scope>
</reference>
<reference evidence="29" key="22">
    <citation type="journal article" date="1998" name="Neuron">
        <title>Structure-function analysis of cell adhesion by neural (N-) cadherin.</title>
        <authorList>
            <person name="Tamura K."/>
            <person name="Shan W.S."/>
            <person name="Hendrickson W.A."/>
            <person name="Colman D.R."/>
            <person name="Shapiro L."/>
        </authorList>
    </citation>
    <scope>X-RAY CRYSTALLOGRAPHY (3.40 ANGSTROMS) OF 160-374 IN COMPLEX WITH CALCIUM</scope>
    <scope>FUNCTION</scope>
    <scope>SUBCELLULAR LOCATION</scope>
    <scope>MUTAGENESIS OF TRP-161; VAL-162; ALA-237 AND ALA-239</scope>
</reference>
<reference evidence="30" key="23">
    <citation type="journal article" date="2011" name="Structure">
        <title>The extracellular architecture of adherens junctions revealed by crystal structures of type I cadherins.</title>
        <authorList>
            <person name="Harrison O.J."/>
            <person name="Jin X."/>
            <person name="Hong S."/>
            <person name="Bahna F."/>
            <person name="Ahlsen G."/>
            <person name="Brasch J."/>
            <person name="Wu Y."/>
            <person name="Vendome J."/>
            <person name="Felsovalyi K."/>
            <person name="Hampton C.M."/>
            <person name="Troyanovsky R.B."/>
            <person name="Ben-Shaul A."/>
            <person name="Frank J."/>
            <person name="Troyanovsky S.M."/>
            <person name="Shapiro L."/>
            <person name="Honig B."/>
        </authorList>
    </citation>
    <scope>X-RAY CRYSTALLOGRAPHY (3.20 ANGSTROMS) OF 160-712 IN COMPLEX WITH CALCIUM</scope>
    <scope>SUBUNIT</scope>
    <scope>DOMAIN</scope>
    <scope>GLYCOSYLATION ON SER AND THR RESIDUES</scope>
    <scope>GLYCOSYLATION AT ASN-273; ASN-325; ASN-402; ASN-572 AND ASN-651</scope>
</reference>
<reference evidence="31 32 33" key="24">
    <citation type="journal article" date="2014" name="Proc. Natl. Acad. Sci. U.S.A.">
        <title>Structural and energetic determinants of adhesive binding specificity in type I cadherins.</title>
        <authorList>
            <person name="Vendome J."/>
            <person name="Felsovalyi K."/>
            <person name="Song H."/>
            <person name="Yang Z."/>
            <person name="Jin X."/>
            <person name="Brasch J."/>
            <person name="Harrison O.J."/>
            <person name="Ahlsen G."/>
            <person name="Bahna F."/>
            <person name="Kaczynska A."/>
            <person name="Katsamba P.S."/>
            <person name="Edmond D."/>
            <person name="Hubbell W.L."/>
            <person name="Shapiro L."/>
            <person name="Honig B."/>
        </authorList>
    </citation>
    <scope>X-RAY CRYSTALLOGRAPHY (2.12 ANGSTROMS) OF 160-374 IN COMPLEX WITH CALCIUM</scope>
    <scope>FUNCTION</scope>
    <scope>SUBUNIT</scope>
    <scope>MUTAGENESIS OF TRP-161 AND ARG-173</scope>
</reference>
<evidence type="ECO:0000250" key="1">
    <source>
        <dbReference type="UniProtKB" id="P10288"/>
    </source>
</evidence>
<evidence type="ECO:0000250" key="2">
    <source>
        <dbReference type="UniProtKB" id="P19022"/>
    </source>
</evidence>
<evidence type="ECO:0000250" key="3">
    <source>
        <dbReference type="UniProtKB" id="Q9Z1Y3"/>
    </source>
</evidence>
<evidence type="ECO:0000255" key="4"/>
<evidence type="ECO:0000255" key="5">
    <source>
        <dbReference type="PROSITE-ProRule" id="PRU00043"/>
    </source>
</evidence>
<evidence type="ECO:0000256" key="6">
    <source>
        <dbReference type="SAM" id="MobiDB-lite"/>
    </source>
</evidence>
<evidence type="ECO:0000269" key="7">
    <source>
    </source>
</evidence>
<evidence type="ECO:0000269" key="8">
    <source>
    </source>
</evidence>
<evidence type="ECO:0000269" key="9">
    <source>
    </source>
</evidence>
<evidence type="ECO:0000269" key="10">
    <source>
    </source>
</evidence>
<evidence type="ECO:0000269" key="11">
    <source>
    </source>
</evidence>
<evidence type="ECO:0000269" key="12">
    <source>
    </source>
</evidence>
<evidence type="ECO:0000269" key="13">
    <source>
    </source>
</evidence>
<evidence type="ECO:0000269" key="14">
    <source>
    </source>
</evidence>
<evidence type="ECO:0000269" key="15">
    <source>
    </source>
</evidence>
<evidence type="ECO:0000269" key="16">
    <source>
    </source>
</evidence>
<evidence type="ECO:0000269" key="17">
    <source>
    </source>
</evidence>
<evidence type="ECO:0000269" key="18">
    <source>
    </source>
</evidence>
<evidence type="ECO:0000269" key="19">
    <source>
    </source>
</evidence>
<evidence type="ECO:0000269" key="20">
    <source>
    </source>
</evidence>
<evidence type="ECO:0000269" key="21">
    <source>
    </source>
</evidence>
<evidence type="ECO:0000269" key="22">
    <source>
    </source>
</evidence>
<evidence type="ECO:0000269" key="23">
    <source>
    </source>
</evidence>
<evidence type="ECO:0000269" key="24">
    <source>
    </source>
</evidence>
<evidence type="ECO:0000305" key="25"/>
<evidence type="ECO:0007744" key="26">
    <source>
        <dbReference type="PDB" id="1NCG"/>
    </source>
</evidence>
<evidence type="ECO:0007744" key="27">
    <source>
        <dbReference type="PDB" id="1NCH"/>
    </source>
</evidence>
<evidence type="ECO:0007744" key="28">
    <source>
        <dbReference type="PDB" id="1NCI"/>
    </source>
</evidence>
<evidence type="ECO:0007744" key="29">
    <source>
        <dbReference type="PDB" id="1NCJ"/>
    </source>
</evidence>
<evidence type="ECO:0007744" key="30">
    <source>
        <dbReference type="PDB" id="3Q2W"/>
    </source>
</evidence>
<evidence type="ECO:0007744" key="31">
    <source>
        <dbReference type="PDB" id="4NUM"/>
    </source>
</evidence>
<evidence type="ECO:0007744" key="32">
    <source>
        <dbReference type="PDB" id="4NUP"/>
    </source>
</evidence>
<evidence type="ECO:0007744" key="33">
    <source>
        <dbReference type="PDB" id="4NUQ"/>
    </source>
</evidence>
<evidence type="ECO:0007829" key="34">
    <source>
        <dbReference type="PDB" id="1NCG"/>
    </source>
</evidence>
<evidence type="ECO:0007829" key="35">
    <source>
        <dbReference type="PDB" id="1NCI"/>
    </source>
</evidence>
<evidence type="ECO:0007829" key="36">
    <source>
        <dbReference type="PDB" id="1OP4"/>
    </source>
</evidence>
<evidence type="ECO:0007829" key="37">
    <source>
        <dbReference type="PDB" id="2QVI"/>
    </source>
</evidence>
<evidence type="ECO:0007829" key="38">
    <source>
        <dbReference type="PDB" id="3Q2W"/>
    </source>
</evidence>
<evidence type="ECO:0007829" key="39">
    <source>
        <dbReference type="PDB" id="4NUQ"/>
    </source>
</evidence>
<dbReference type="EMBL" id="M31131">
    <property type="protein sequence ID" value="AAA37353.1"/>
    <property type="molecule type" value="mRNA"/>
</dbReference>
<dbReference type="EMBL" id="AB008811">
    <property type="protein sequence ID" value="BAA23549.1"/>
    <property type="molecule type" value="mRNA"/>
</dbReference>
<dbReference type="EMBL" id="S45011">
    <property type="protein sequence ID" value="AAB23356.1"/>
    <property type="molecule type" value="Genomic_DNA"/>
</dbReference>
<dbReference type="EMBL" id="CH466557">
    <property type="protein sequence ID" value="EDK96930.1"/>
    <property type="molecule type" value="Genomic_DNA"/>
</dbReference>
<dbReference type="EMBL" id="BC022107">
    <property type="protein sequence ID" value="AAH22107.1"/>
    <property type="molecule type" value="mRNA"/>
</dbReference>
<dbReference type="CCDS" id="CCDS29076.1"/>
<dbReference type="PIR" id="A32759">
    <property type="entry name" value="IJMSCN"/>
</dbReference>
<dbReference type="RefSeq" id="NP_031690.3">
    <property type="nucleotide sequence ID" value="NM_007664.5"/>
</dbReference>
<dbReference type="PDB" id="1NCG">
    <property type="method" value="X-ray"/>
    <property type="resolution" value="2.10 A"/>
    <property type="chains" value="A=160-267"/>
</dbReference>
<dbReference type="PDB" id="1NCH">
    <property type="method" value="X-ray"/>
    <property type="resolution" value="2.10 A"/>
    <property type="chains" value="A/B=160-267"/>
</dbReference>
<dbReference type="PDB" id="1NCI">
    <property type="method" value="X-ray"/>
    <property type="resolution" value="2.10 A"/>
    <property type="chains" value="A/B=160-267"/>
</dbReference>
<dbReference type="PDB" id="1NCJ">
    <property type="method" value="X-ray"/>
    <property type="resolution" value="3.40 A"/>
    <property type="chains" value="A=160-374"/>
</dbReference>
<dbReference type="PDB" id="1OP4">
    <property type="method" value="NMR"/>
    <property type="chains" value="A=24-159"/>
</dbReference>
<dbReference type="PDB" id="2QVI">
    <property type="method" value="X-ray"/>
    <property type="resolution" value="3.01 A"/>
    <property type="chains" value="A=160-374"/>
</dbReference>
<dbReference type="PDB" id="3Q2W">
    <property type="method" value="X-ray"/>
    <property type="resolution" value="3.20 A"/>
    <property type="chains" value="A=160-712"/>
</dbReference>
<dbReference type="PDB" id="4NUM">
    <property type="method" value="X-ray"/>
    <property type="resolution" value="3.30 A"/>
    <property type="chains" value="A/B/C/D=160-374"/>
</dbReference>
<dbReference type="PDB" id="4NUP">
    <property type="method" value="X-ray"/>
    <property type="resolution" value="2.70 A"/>
    <property type="chains" value="A/B/C=162-374"/>
</dbReference>
<dbReference type="PDB" id="4NUQ">
    <property type="method" value="X-ray"/>
    <property type="resolution" value="2.12 A"/>
    <property type="chains" value="A=160-374"/>
</dbReference>
<dbReference type="PDBsum" id="1NCG"/>
<dbReference type="PDBsum" id="1NCH"/>
<dbReference type="PDBsum" id="1NCI"/>
<dbReference type="PDBsum" id="1NCJ"/>
<dbReference type="PDBsum" id="1OP4"/>
<dbReference type="PDBsum" id="2QVI"/>
<dbReference type="PDBsum" id="3Q2W"/>
<dbReference type="PDBsum" id="4NUM"/>
<dbReference type="PDBsum" id="4NUP"/>
<dbReference type="PDBsum" id="4NUQ"/>
<dbReference type="SASBDB" id="P15116"/>
<dbReference type="SMR" id="P15116"/>
<dbReference type="BioGRID" id="198637">
    <property type="interactions" value="38"/>
</dbReference>
<dbReference type="CORUM" id="P15116"/>
<dbReference type="DIP" id="DIP-31564N"/>
<dbReference type="FunCoup" id="P15116">
    <property type="interactions" value="556"/>
</dbReference>
<dbReference type="IntAct" id="P15116">
    <property type="interactions" value="17"/>
</dbReference>
<dbReference type="MINT" id="P15116"/>
<dbReference type="STRING" id="10090.ENSMUSP00000025166"/>
<dbReference type="GlyConnect" id="2169">
    <property type="glycosylation" value="7 N-Linked glycans (3 sites)"/>
</dbReference>
<dbReference type="GlyCosmos" id="P15116">
    <property type="glycosylation" value="7 sites, 7 glycans"/>
</dbReference>
<dbReference type="GlyGen" id="P15116">
    <property type="glycosylation" value="19 sites, 12 N-linked glycans (6 sites), 1 O-linked glycan (1 site)"/>
</dbReference>
<dbReference type="iPTMnet" id="P15116"/>
<dbReference type="PhosphoSitePlus" id="P15116"/>
<dbReference type="SwissPalm" id="P15116"/>
<dbReference type="jPOST" id="P15116"/>
<dbReference type="PaxDb" id="10090-ENSMUSP00000025166"/>
<dbReference type="PeptideAtlas" id="P15116"/>
<dbReference type="ProteomicsDB" id="265498"/>
<dbReference type="Pumba" id="P15116"/>
<dbReference type="Antibodypedia" id="4558">
    <property type="antibodies" value="1831 antibodies from 53 providers"/>
</dbReference>
<dbReference type="DNASU" id="12558"/>
<dbReference type="Ensembl" id="ENSMUST00000025166.14">
    <property type="protein sequence ID" value="ENSMUSP00000025166.8"/>
    <property type="gene ID" value="ENSMUSG00000024304.15"/>
</dbReference>
<dbReference type="GeneID" id="12558"/>
<dbReference type="KEGG" id="mmu:12558"/>
<dbReference type="UCSC" id="uc008edx.2">
    <property type="organism name" value="mouse"/>
</dbReference>
<dbReference type="AGR" id="MGI:88355"/>
<dbReference type="CTD" id="1000"/>
<dbReference type="MGI" id="MGI:88355">
    <property type="gene designation" value="Cdh2"/>
</dbReference>
<dbReference type="VEuPathDB" id="HostDB:ENSMUSG00000024304"/>
<dbReference type="eggNOG" id="KOG3594">
    <property type="taxonomic scope" value="Eukaryota"/>
</dbReference>
<dbReference type="GeneTree" id="ENSGT00940000155981"/>
<dbReference type="InParanoid" id="P15116"/>
<dbReference type="OMA" id="KEQWQVI"/>
<dbReference type="OrthoDB" id="6079678at2759"/>
<dbReference type="PhylomeDB" id="P15116"/>
<dbReference type="TreeFam" id="TF316817"/>
<dbReference type="Reactome" id="R-MMU-381426">
    <property type="pathway name" value="Regulation of Insulin-like Growth Factor (IGF) transport and uptake by Insulin-like Growth Factor Binding Proteins (IGFBPs)"/>
</dbReference>
<dbReference type="Reactome" id="R-MMU-418990">
    <property type="pathway name" value="Adherens junctions interactions"/>
</dbReference>
<dbReference type="Reactome" id="R-MMU-525793">
    <property type="pathway name" value="Myogenesis"/>
</dbReference>
<dbReference type="Reactome" id="R-MMU-8957275">
    <property type="pathway name" value="Post-translational protein phosphorylation"/>
</dbReference>
<dbReference type="BioGRID-ORCS" id="12558">
    <property type="hits" value="3 hits in 79 CRISPR screens"/>
</dbReference>
<dbReference type="CD-CODE" id="CE726F99">
    <property type="entry name" value="Postsynaptic density"/>
</dbReference>
<dbReference type="ChiTaRS" id="Cdh2">
    <property type="organism name" value="mouse"/>
</dbReference>
<dbReference type="EvolutionaryTrace" id="P15116"/>
<dbReference type="PRO" id="PR:P15116"/>
<dbReference type="Proteomes" id="UP000000589">
    <property type="component" value="Chromosome 18"/>
</dbReference>
<dbReference type="RNAct" id="P15116">
    <property type="molecule type" value="protein"/>
</dbReference>
<dbReference type="Bgee" id="ENSMUSG00000024304">
    <property type="expression patterns" value="Expressed in median eminence of neurohypophysis and 309 other cell types or tissues"/>
</dbReference>
<dbReference type="ExpressionAtlas" id="P15116">
    <property type="expression patterns" value="baseline and differential"/>
</dbReference>
<dbReference type="GO" id="GO:0005912">
    <property type="term" value="C:adherens junction"/>
    <property type="evidence" value="ECO:0000314"/>
    <property type="project" value="UniProtKB"/>
</dbReference>
<dbReference type="GO" id="GO:0016324">
    <property type="term" value="C:apical plasma membrane"/>
    <property type="evidence" value="ECO:0000314"/>
    <property type="project" value="MGI"/>
</dbReference>
<dbReference type="GO" id="GO:0016327">
    <property type="term" value="C:apicolateral plasma membrane"/>
    <property type="evidence" value="ECO:0000314"/>
    <property type="project" value="MGI"/>
</dbReference>
<dbReference type="GO" id="GO:0016323">
    <property type="term" value="C:basolateral plasma membrane"/>
    <property type="evidence" value="ECO:0000314"/>
    <property type="project" value="MGI"/>
</dbReference>
<dbReference type="GO" id="GO:0016342">
    <property type="term" value="C:catenin complex"/>
    <property type="evidence" value="ECO:0007669"/>
    <property type="project" value="Ensembl"/>
</dbReference>
<dbReference type="GO" id="GO:0009986">
    <property type="term" value="C:cell surface"/>
    <property type="evidence" value="ECO:0000314"/>
    <property type="project" value="UniProtKB"/>
</dbReference>
<dbReference type="GO" id="GO:0005911">
    <property type="term" value="C:cell-cell junction"/>
    <property type="evidence" value="ECO:0000314"/>
    <property type="project" value="UniProtKB"/>
</dbReference>
<dbReference type="GO" id="GO:0030864">
    <property type="term" value="C:cortical actin cytoskeleton"/>
    <property type="evidence" value="ECO:0007669"/>
    <property type="project" value="Ensembl"/>
</dbReference>
<dbReference type="GO" id="GO:0030057">
    <property type="term" value="C:desmosome"/>
    <property type="evidence" value="ECO:0000314"/>
    <property type="project" value="UniProtKB"/>
</dbReference>
<dbReference type="GO" id="GO:0005916">
    <property type="term" value="C:fascia adherens"/>
    <property type="evidence" value="ECO:0000314"/>
    <property type="project" value="MGI"/>
</dbReference>
<dbReference type="GO" id="GO:0014704">
    <property type="term" value="C:intercalated disc"/>
    <property type="evidence" value="ECO:0000314"/>
    <property type="project" value="UniProtKB"/>
</dbReference>
<dbReference type="GO" id="GO:0030027">
    <property type="term" value="C:lamellipodium"/>
    <property type="evidence" value="ECO:0000314"/>
    <property type="project" value="MGI"/>
</dbReference>
<dbReference type="GO" id="GO:0016020">
    <property type="term" value="C:membrane"/>
    <property type="evidence" value="ECO:0000266"/>
    <property type="project" value="MGI"/>
</dbReference>
<dbReference type="GO" id="GO:0005886">
    <property type="term" value="C:plasma membrane"/>
    <property type="evidence" value="ECO:0000314"/>
    <property type="project" value="UniProtKB"/>
</dbReference>
<dbReference type="GO" id="GO:0044853">
    <property type="term" value="C:plasma membrane raft"/>
    <property type="evidence" value="ECO:0000314"/>
    <property type="project" value="UniProtKB"/>
</dbReference>
<dbReference type="GO" id="GO:0098793">
    <property type="term" value="C:presynapse"/>
    <property type="evidence" value="ECO:0007669"/>
    <property type="project" value="GOC"/>
</dbReference>
<dbReference type="GO" id="GO:0042383">
    <property type="term" value="C:sarcolemma"/>
    <property type="evidence" value="ECO:0000314"/>
    <property type="project" value="UniProtKB"/>
</dbReference>
<dbReference type="GO" id="GO:0045202">
    <property type="term" value="C:synapse"/>
    <property type="evidence" value="ECO:0000314"/>
    <property type="project" value="MGI"/>
</dbReference>
<dbReference type="GO" id="GO:0045294">
    <property type="term" value="F:alpha-catenin binding"/>
    <property type="evidence" value="ECO:0007669"/>
    <property type="project" value="Ensembl"/>
</dbReference>
<dbReference type="GO" id="GO:0008013">
    <property type="term" value="F:beta-catenin binding"/>
    <property type="evidence" value="ECO:0007669"/>
    <property type="project" value="Ensembl"/>
</dbReference>
<dbReference type="GO" id="GO:0005509">
    <property type="term" value="F:calcium ion binding"/>
    <property type="evidence" value="ECO:0000314"/>
    <property type="project" value="UniProtKB"/>
</dbReference>
<dbReference type="GO" id="GO:0019899">
    <property type="term" value="F:enzyme binding"/>
    <property type="evidence" value="ECO:0000353"/>
    <property type="project" value="UniProtKB"/>
</dbReference>
<dbReference type="GO" id="GO:0045295">
    <property type="term" value="F:gamma-catenin binding"/>
    <property type="evidence" value="ECO:0007669"/>
    <property type="project" value="Ensembl"/>
</dbReference>
<dbReference type="GO" id="GO:0042802">
    <property type="term" value="F:identical protein binding"/>
    <property type="evidence" value="ECO:0000353"/>
    <property type="project" value="IntAct"/>
</dbReference>
<dbReference type="GO" id="GO:0019901">
    <property type="term" value="F:protein kinase binding"/>
    <property type="evidence" value="ECO:0000353"/>
    <property type="project" value="UniProtKB"/>
</dbReference>
<dbReference type="GO" id="GO:0019903">
    <property type="term" value="F:protein phosphatase binding"/>
    <property type="evidence" value="ECO:0000353"/>
    <property type="project" value="UniProtKB"/>
</dbReference>
<dbReference type="GO" id="GO:0003723">
    <property type="term" value="F:RNA binding"/>
    <property type="evidence" value="ECO:0000314"/>
    <property type="project" value="MGI"/>
</dbReference>
<dbReference type="GO" id="GO:0048514">
    <property type="term" value="P:blood vessel morphogenesis"/>
    <property type="evidence" value="ECO:0000315"/>
    <property type="project" value="MGI"/>
</dbReference>
<dbReference type="GO" id="GO:0048854">
    <property type="term" value="P:brain morphogenesis"/>
    <property type="evidence" value="ECO:0000316"/>
    <property type="project" value="MGI"/>
</dbReference>
<dbReference type="GO" id="GO:0016339">
    <property type="term" value="P:calcium-dependent cell-cell adhesion via plasma membrane cell adhesion molecules"/>
    <property type="evidence" value="ECO:0000314"/>
    <property type="project" value="MGI"/>
</dbReference>
<dbReference type="GO" id="GO:0007155">
    <property type="term" value="P:cell adhesion"/>
    <property type="evidence" value="ECO:0000314"/>
    <property type="project" value="MGI"/>
</dbReference>
<dbReference type="GO" id="GO:0016477">
    <property type="term" value="P:cell migration"/>
    <property type="evidence" value="ECO:0000314"/>
    <property type="project" value="MGI"/>
</dbReference>
<dbReference type="GO" id="GO:0098609">
    <property type="term" value="P:cell-cell adhesion"/>
    <property type="evidence" value="ECO:0000314"/>
    <property type="project" value="UniProtKB"/>
</dbReference>
<dbReference type="GO" id="GO:0044331">
    <property type="term" value="P:cell-cell adhesion mediated by cadherin"/>
    <property type="evidence" value="ECO:0000314"/>
    <property type="project" value="UniProtKB"/>
</dbReference>
<dbReference type="GO" id="GO:0007043">
    <property type="term" value="P:cell-cell junction assembly"/>
    <property type="evidence" value="ECO:0000315"/>
    <property type="project" value="UniProtKB"/>
</dbReference>
<dbReference type="GO" id="GO:0021987">
    <property type="term" value="P:cerebral cortex development"/>
    <property type="evidence" value="ECO:0000316"/>
    <property type="project" value="MGI"/>
</dbReference>
<dbReference type="GO" id="GO:0010001">
    <property type="term" value="P:glial cell differentiation"/>
    <property type="evidence" value="ECO:0000314"/>
    <property type="project" value="UniProtKB"/>
</dbReference>
<dbReference type="GO" id="GO:0007157">
    <property type="term" value="P:heterophilic cell-cell adhesion via plasma membrane cell adhesion molecules"/>
    <property type="evidence" value="ECO:0000314"/>
    <property type="project" value="MGI"/>
</dbReference>
<dbReference type="GO" id="GO:0048872">
    <property type="term" value="P:homeostasis of number of cells"/>
    <property type="evidence" value="ECO:0000316"/>
    <property type="project" value="MGI"/>
</dbReference>
<dbReference type="GO" id="GO:0007156">
    <property type="term" value="P:homophilic cell adhesion via plasma membrane adhesion molecules"/>
    <property type="evidence" value="ECO:0000314"/>
    <property type="project" value="MGI"/>
</dbReference>
<dbReference type="GO" id="GO:0090497">
    <property type="term" value="P:mesenchymal cell migration"/>
    <property type="evidence" value="ECO:0000315"/>
    <property type="project" value="MGI"/>
</dbReference>
<dbReference type="GO" id="GO:0090090">
    <property type="term" value="P:negative regulation of canonical Wnt signaling pathway"/>
    <property type="evidence" value="ECO:0000316"/>
    <property type="project" value="MGI"/>
</dbReference>
<dbReference type="GO" id="GO:0014032">
    <property type="term" value="P:neural crest cell development"/>
    <property type="evidence" value="ECO:0000315"/>
    <property type="project" value="UniProtKB"/>
</dbReference>
<dbReference type="GO" id="GO:0060563">
    <property type="term" value="P:neuroepithelial cell differentiation"/>
    <property type="evidence" value="ECO:0000316"/>
    <property type="project" value="MGI"/>
</dbReference>
<dbReference type="GO" id="GO:0097118">
    <property type="term" value="P:neuroligin clustering involved in postsynaptic membrane assembly"/>
    <property type="evidence" value="ECO:0000315"/>
    <property type="project" value="BHF-UCL"/>
</dbReference>
<dbReference type="GO" id="GO:0097150">
    <property type="term" value="P:neuronal stem cell population maintenance"/>
    <property type="evidence" value="ECO:0000314"/>
    <property type="project" value="UniProtKB"/>
</dbReference>
<dbReference type="GO" id="GO:0043410">
    <property type="term" value="P:positive regulation of MAPK cascade"/>
    <property type="evidence" value="ECO:0000316"/>
    <property type="project" value="MGI"/>
</dbReference>
<dbReference type="GO" id="GO:2000809">
    <property type="term" value="P:positive regulation of synaptic vesicle clustering"/>
    <property type="evidence" value="ECO:0000315"/>
    <property type="project" value="BHF-UCL"/>
</dbReference>
<dbReference type="GO" id="GO:0072659">
    <property type="term" value="P:protein localization to plasma membrane"/>
    <property type="evidence" value="ECO:0000314"/>
    <property type="project" value="UniProtKB"/>
</dbReference>
<dbReference type="GO" id="GO:0060019">
    <property type="term" value="P:radial glial cell differentiation"/>
    <property type="evidence" value="ECO:0000316"/>
    <property type="project" value="MGI"/>
</dbReference>
<dbReference type="GO" id="GO:0070445">
    <property type="term" value="P:regulation of oligodendrocyte progenitor proliferation"/>
    <property type="evidence" value="ECO:0000316"/>
    <property type="project" value="MGI"/>
</dbReference>
<dbReference type="GO" id="GO:1902897">
    <property type="term" value="P:regulation of postsynaptic density protein 95 clustering"/>
    <property type="evidence" value="ECO:0000315"/>
    <property type="project" value="BHF-UCL"/>
</dbReference>
<dbReference type="GO" id="GO:0051146">
    <property type="term" value="P:striated muscle cell differentiation"/>
    <property type="evidence" value="ECO:0000316"/>
    <property type="project" value="MGI"/>
</dbReference>
<dbReference type="GO" id="GO:0097091">
    <property type="term" value="P:synaptic vesicle clustering"/>
    <property type="evidence" value="ECO:0000315"/>
    <property type="project" value="UniProtKB"/>
</dbReference>
<dbReference type="GO" id="GO:0021537">
    <property type="term" value="P:telencephalon development"/>
    <property type="evidence" value="ECO:0000316"/>
    <property type="project" value="MGI"/>
</dbReference>
<dbReference type="GO" id="GO:0003323">
    <property type="term" value="P:type B pancreatic cell development"/>
    <property type="evidence" value="ECO:0000315"/>
    <property type="project" value="UniProtKB"/>
</dbReference>
<dbReference type="CDD" id="cd11304">
    <property type="entry name" value="Cadherin_repeat"/>
    <property type="match status" value="3"/>
</dbReference>
<dbReference type="FunFam" id="2.60.40.60:FF:000011">
    <property type="entry name" value="Cadherin 1"/>
    <property type="match status" value="1"/>
</dbReference>
<dbReference type="FunFam" id="2.60.40.60:FF:000019">
    <property type="entry name" value="Cadherin 2"/>
    <property type="match status" value="1"/>
</dbReference>
<dbReference type="FunFam" id="2.60.40.60:FF:000022">
    <property type="entry name" value="Cadherin 2"/>
    <property type="match status" value="1"/>
</dbReference>
<dbReference type="FunFam" id="2.60.40.60:FF:000027">
    <property type="entry name" value="Cadherin 2"/>
    <property type="match status" value="1"/>
</dbReference>
<dbReference type="FunFam" id="2.60.40.60:FF:000045">
    <property type="entry name" value="Cadherin 2"/>
    <property type="match status" value="1"/>
</dbReference>
<dbReference type="FunFam" id="4.10.900.10:FF:000001">
    <property type="entry name" value="Cadherin 2"/>
    <property type="match status" value="1"/>
</dbReference>
<dbReference type="FunFam" id="2.60.40.60:FF:000139">
    <property type="entry name" value="Cadherin-2 preproprotein"/>
    <property type="match status" value="1"/>
</dbReference>
<dbReference type="Gene3D" id="2.60.40.60">
    <property type="entry name" value="Cadherins"/>
    <property type="match status" value="6"/>
</dbReference>
<dbReference type="Gene3D" id="4.10.900.10">
    <property type="entry name" value="TCF3-CBD (Catenin binding domain)"/>
    <property type="match status" value="1"/>
</dbReference>
<dbReference type="InterPro" id="IPR039808">
    <property type="entry name" value="Cadherin"/>
</dbReference>
<dbReference type="InterPro" id="IPR002126">
    <property type="entry name" value="Cadherin-like_dom"/>
</dbReference>
<dbReference type="InterPro" id="IPR015919">
    <property type="entry name" value="Cadherin-like_sf"/>
</dbReference>
<dbReference type="InterPro" id="IPR020894">
    <property type="entry name" value="Cadherin_CS"/>
</dbReference>
<dbReference type="InterPro" id="IPR014868">
    <property type="entry name" value="Cadherin_pro_dom"/>
</dbReference>
<dbReference type="InterPro" id="IPR000233">
    <property type="entry name" value="Cadherin_Y-type_LIR"/>
</dbReference>
<dbReference type="InterPro" id="IPR027397">
    <property type="entry name" value="Catenin-bd_sf"/>
</dbReference>
<dbReference type="PANTHER" id="PTHR24027:SF79">
    <property type="entry name" value="CADHERIN-2"/>
    <property type="match status" value="1"/>
</dbReference>
<dbReference type="PANTHER" id="PTHR24027">
    <property type="entry name" value="CADHERIN-23"/>
    <property type="match status" value="1"/>
</dbReference>
<dbReference type="Pfam" id="PF01049">
    <property type="entry name" value="CADH_Y-type_LIR"/>
    <property type="match status" value="1"/>
</dbReference>
<dbReference type="Pfam" id="PF00028">
    <property type="entry name" value="Cadherin"/>
    <property type="match status" value="5"/>
</dbReference>
<dbReference type="Pfam" id="PF08758">
    <property type="entry name" value="Cadherin_pro"/>
    <property type="match status" value="1"/>
</dbReference>
<dbReference type="PRINTS" id="PR00205">
    <property type="entry name" value="CADHERIN"/>
</dbReference>
<dbReference type="PRINTS" id="PR01820">
    <property type="entry name" value="DESMOCOLLIN"/>
</dbReference>
<dbReference type="SMART" id="SM00112">
    <property type="entry name" value="CA"/>
    <property type="match status" value="5"/>
</dbReference>
<dbReference type="SMART" id="SM01055">
    <property type="entry name" value="Cadherin_pro"/>
    <property type="match status" value="1"/>
</dbReference>
<dbReference type="SUPFAM" id="SSF49313">
    <property type="entry name" value="Cadherin-like"/>
    <property type="match status" value="6"/>
</dbReference>
<dbReference type="PROSITE" id="PS00232">
    <property type="entry name" value="CADHERIN_1"/>
    <property type="match status" value="3"/>
</dbReference>
<dbReference type="PROSITE" id="PS50268">
    <property type="entry name" value="CADHERIN_2"/>
    <property type="match status" value="5"/>
</dbReference>
<keyword id="KW-0002">3D-structure</keyword>
<keyword id="KW-0106">Calcium</keyword>
<keyword id="KW-0130">Cell adhesion</keyword>
<keyword id="KW-0965">Cell junction</keyword>
<keyword id="KW-1003">Cell membrane</keyword>
<keyword id="KW-0165">Cleavage on pair of basic residues</keyword>
<keyword id="KW-0325">Glycoprotein</keyword>
<keyword id="KW-0472">Membrane</keyword>
<keyword id="KW-0479">Metal-binding</keyword>
<keyword id="KW-0597">Phosphoprotein</keyword>
<keyword id="KW-1185">Reference proteome</keyword>
<keyword id="KW-0677">Repeat</keyword>
<keyword id="KW-0732">Signal</keyword>
<keyword id="KW-0812">Transmembrane</keyword>
<keyword id="KW-1133">Transmembrane helix</keyword>
<protein>
    <recommendedName>
        <fullName>Cadherin-2</fullName>
    </recommendedName>
    <alternativeName>
        <fullName>Neural cadherin</fullName>
        <shortName>N-cadherin</shortName>
    </alternativeName>
    <cdAntigenName>CD325</cdAntigenName>
</protein>
<name>CADH2_MOUSE</name>